<keyword id="KW-0106">Calcium</keyword>
<keyword id="KW-0176">Collagen</keyword>
<keyword id="KW-1018">Complement activation lectin pathway</keyword>
<keyword id="KW-0180">Complement pathway</keyword>
<keyword id="KW-1015">Disulfide bond</keyword>
<keyword id="KW-0325">Glycoprotein</keyword>
<keyword id="KW-0379">Hydroxylation</keyword>
<keyword id="KW-0391">Immunity</keyword>
<keyword id="KW-0399">Innate immunity</keyword>
<keyword id="KW-0430">Lectin</keyword>
<keyword id="KW-0465">Mannose-binding</keyword>
<keyword id="KW-1185">Reference proteome</keyword>
<keyword id="KW-0677">Repeat</keyword>
<keyword id="KW-0964">Secreted</keyword>
<keyword id="KW-0732">Signal</keyword>
<comment type="function">
    <text evidence="2">Calcium-dependent lectin involved in innate immune defense. Binds mannose, fucose and N-acetylglucosamine on different microorganisms and activates the lectin complement pathway.</text>
</comment>
<comment type="subunit">
    <text evidence="1">Oligomeric complex of 3 or more homotrimers.</text>
</comment>
<comment type="subcellular location">
    <subcellularLocation>
        <location evidence="1">Secreted</location>
    </subcellularLocation>
</comment>
<comment type="miscellaneous">
    <text evidence="6">In contrast to mammals, which contain two copies of MBL (MBL1 and MBL2), chicken genome only contains one copy of MBL.</text>
</comment>
<dbReference type="EMBL" id="AF231714">
    <property type="protein sequence ID" value="AAK30298.1"/>
    <property type="molecule type" value="mRNA"/>
</dbReference>
<dbReference type="EMBL" id="KU378614">
    <property type="protein sequence ID" value="ANH22044.1"/>
    <property type="molecule type" value="mRNA"/>
</dbReference>
<dbReference type="EMBL" id="KU378615">
    <property type="protein sequence ID" value="ANH22045.1"/>
    <property type="molecule type" value="mRNA"/>
</dbReference>
<dbReference type="EMBL" id="KF469209">
    <property type="protein sequence ID" value="AHA14647.1"/>
    <property type="molecule type" value="mRNA"/>
</dbReference>
<dbReference type="EMBL" id="AADN03005176">
    <property type="status" value="NOT_ANNOTATED_CDS"/>
    <property type="molecule type" value="Genomic_DNA"/>
</dbReference>
<dbReference type="RefSeq" id="NP_989680.2">
    <property type="nucleotide sequence ID" value="NM_204349.2"/>
</dbReference>
<dbReference type="SMR" id="Q98TA4"/>
<dbReference type="FunCoup" id="Q98TA4">
    <property type="interactions" value="71"/>
</dbReference>
<dbReference type="STRING" id="9031.ENSGALP00000040351"/>
<dbReference type="GlyCosmos" id="Q98TA4">
    <property type="glycosylation" value="2 sites, No reported glycans"/>
</dbReference>
<dbReference type="GlyGen" id="Q98TA4">
    <property type="glycosylation" value="2 sites"/>
</dbReference>
<dbReference type="PaxDb" id="9031-ENSGALP00000040351"/>
<dbReference type="GeneID" id="374267"/>
<dbReference type="KEGG" id="gga:374267"/>
<dbReference type="CTD" id="4153"/>
<dbReference type="VEuPathDB" id="HostDB:geneid_374267"/>
<dbReference type="eggNOG" id="KOG4297">
    <property type="taxonomic scope" value="Eukaryota"/>
</dbReference>
<dbReference type="InParanoid" id="Q98TA4"/>
<dbReference type="OrthoDB" id="10255512at2759"/>
<dbReference type="PhylomeDB" id="Q98TA4"/>
<dbReference type="TreeFam" id="TF330481"/>
<dbReference type="Reactome" id="R-GGA-166662">
    <property type="pathway name" value="Lectin pathway of complement activation"/>
</dbReference>
<dbReference type="Reactome" id="R-GGA-166663">
    <property type="pathway name" value="Initial triggering of complement"/>
</dbReference>
<dbReference type="Reactome" id="R-GGA-2132263">
    <property type="pathway name" value="Creation of classical C3 convertase"/>
</dbReference>
<dbReference type="Reactome" id="R-GGA-2132270">
    <property type="pathway name" value="Lectin-mediated initiation of complement cascade"/>
</dbReference>
<dbReference type="PRO" id="PR:Q98TA4"/>
<dbReference type="Proteomes" id="UP000000539">
    <property type="component" value="Chromosome 6"/>
</dbReference>
<dbReference type="Bgee" id="ENSGALG00000002507">
    <property type="expression patterns" value="Expressed in liver and 5 other cell types or tissues"/>
</dbReference>
<dbReference type="GO" id="GO:0005581">
    <property type="term" value="C:collagen trimer"/>
    <property type="evidence" value="ECO:0007669"/>
    <property type="project" value="UniProtKB-KW"/>
</dbReference>
<dbReference type="GO" id="GO:0005576">
    <property type="term" value="C:extracellular region"/>
    <property type="evidence" value="ECO:0000304"/>
    <property type="project" value="Reactome"/>
</dbReference>
<dbReference type="GO" id="GO:0005615">
    <property type="term" value="C:extracellular space"/>
    <property type="evidence" value="ECO:0000318"/>
    <property type="project" value="GO_Central"/>
</dbReference>
<dbReference type="GO" id="GO:0005771">
    <property type="term" value="C:multivesicular body"/>
    <property type="evidence" value="ECO:0000318"/>
    <property type="project" value="GO_Central"/>
</dbReference>
<dbReference type="GO" id="GO:0005537">
    <property type="term" value="F:D-mannose binding"/>
    <property type="evidence" value="ECO:0007669"/>
    <property type="project" value="UniProtKB-KW"/>
</dbReference>
<dbReference type="GO" id="GO:0006958">
    <property type="term" value="P:complement activation, classical pathway"/>
    <property type="evidence" value="ECO:0007669"/>
    <property type="project" value="UniProtKB-KW"/>
</dbReference>
<dbReference type="GO" id="GO:0001867">
    <property type="term" value="P:complement activation, lectin pathway"/>
    <property type="evidence" value="ECO:0007669"/>
    <property type="project" value="UniProtKB-KW"/>
</dbReference>
<dbReference type="GO" id="GO:0050766">
    <property type="term" value="P:positive regulation of phagocytosis"/>
    <property type="evidence" value="ECO:0000318"/>
    <property type="project" value="GO_Central"/>
</dbReference>
<dbReference type="GO" id="GO:0043129">
    <property type="term" value="P:surfactant homeostasis"/>
    <property type="evidence" value="ECO:0000318"/>
    <property type="project" value="GO_Central"/>
</dbReference>
<dbReference type="CDD" id="cd03591">
    <property type="entry name" value="CLECT_collectin_like"/>
    <property type="match status" value="1"/>
</dbReference>
<dbReference type="FunFam" id="1.20.5.320:FF:000011">
    <property type="entry name" value="Collagen, type XX, alpha 1"/>
    <property type="match status" value="1"/>
</dbReference>
<dbReference type="FunFam" id="3.10.100.10:FF:000163">
    <property type="entry name" value="Mannose binding lectin 2"/>
    <property type="match status" value="1"/>
</dbReference>
<dbReference type="Gene3D" id="1.20.5.320">
    <property type="entry name" value="6-Phosphogluconate Dehydrogenase, domain 3"/>
    <property type="match status" value="1"/>
</dbReference>
<dbReference type="Gene3D" id="3.10.100.10">
    <property type="entry name" value="Mannose-Binding Protein A, subunit A"/>
    <property type="match status" value="1"/>
</dbReference>
<dbReference type="InterPro" id="IPR001304">
    <property type="entry name" value="C-type_lectin-like"/>
</dbReference>
<dbReference type="InterPro" id="IPR016186">
    <property type="entry name" value="C-type_lectin-like/link_sf"/>
</dbReference>
<dbReference type="InterPro" id="IPR018378">
    <property type="entry name" value="C-type_lectin_CS"/>
</dbReference>
<dbReference type="InterPro" id="IPR051077">
    <property type="entry name" value="Ca-dependent_lectin"/>
</dbReference>
<dbReference type="InterPro" id="IPR008160">
    <property type="entry name" value="Collagen"/>
</dbReference>
<dbReference type="InterPro" id="IPR033990">
    <property type="entry name" value="Collectin_CTLD"/>
</dbReference>
<dbReference type="InterPro" id="IPR016187">
    <property type="entry name" value="CTDL_fold"/>
</dbReference>
<dbReference type="PANTHER" id="PTHR24024:SF42">
    <property type="entry name" value="MANNOSE-BINDING PROTEIN"/>
    <property type="match status" value="1"/>
</dbReference>
<dbReference type="PANTHER" id="PTHR24024">
    <property type="entry name" value="PULMONARY SURFACTANT-ASSOCIATED PROTEIN A"/>
    <property type="match status" value="1"/>
</dbReference>
<dbReference type="Pfam" id="PF01391">
    <property type="entry name" value="Collagen"/>
    <property type="match status" value="1"/>
</dbReference>
<dbReference type="Pfam" id="PF00059">
    <property type="entry name" value="Lectin_C"/>
    <property type="match status" value="1"/>
</dbReference>
<dbReference type="SMART" id="SM00034">
    <property type="entry name" value="CLECT"/>
    <property type="match status" value="1"/>
</dbReference>
<dbReference type="SUPFAM" id="SSF56436">
    <property type="entry name" value="C-type lectin-like"/>
    <property type="match status" value="1"/>
</dbReference>
<dbReference type="PROSITE" id="PS00615">
    <property type="entry name" value="C_TYPE_LECTIN_1"/>
    <property type="match status" value="1"/>
</dbReference>
<dbReference type="PROSITE" id="PS50041">
    <property type="entry name" value="C_TYPE_LECTIN_2"/>
    <property type="match status" value="1"/>
</dbReference>
<evidence type="ECO:0000250" key="1">
    <source>
        <dbReference type="UniProtKB" id="P19999"/>
    </source>
</evidence>
<evidence type="ECO:0000250" key="2">
    <source>
        <dbReference type="UniProtKB" id="Q5U9S1"/>
    </source>
</evidence>
<evidence type="ECO:0000255" key="3"/>
<evidence type="ECO:0000255" key="4">
    <source>
        <dbReference type="PROSITE-ProRule" id="PRU00040"/>
    </source>
</evidence>
<evidence type="ECO:0000256" key="5">
    <source>
        <dbReference type="SAM" id="MobiDB-lite"/>
    </source>
</evidence>
<evidence type="ECO:0000269" key="6">
    <source>
    </source>
</evidence>
<evidence type="ECO:0000305" key="7"/>
<evidence type="ECO:0000312" key="8">
    <source>
        <dbReference type="EMBL" id="AAK30298.1"/>
    </source>
</evidence>
<protein>
    <recommendedName>
        <fullName evidence="7">Mannose-binding protein</fullName>
        <shortName evidence="7">MBP</shortName>
    </recommendedName>
    <alternativeName>
        <fullName evidence="7">Mannan-binding protein</fullName>
    </alternativeName>
</protein>
<name>MBL_CHICK</name>
<reference key="1">
    <citation type="journal article" date="2000" name="Immunogenetics">
        <title>The homologue of mannose-binding lectin in the carp family Cyprinidae is expressed at high level in spleen, and the deduced primary structure predicts affinity for galactose.</title>
        <authorList>
            <person name="Vitved L."/>
            <person name="Holmskov U."/>
            <person name="Koch C."/>
            <person name="Teisner B."/>
            <person name="Hansen S."/>
            <person name="Skjodt K."/>
        </authorList>
    </citation>
    <scope>NUCLEOTIDE SEQUENCE [MRNA]</scope>
</reference>
<reference key="2">
    <citation type="submission" date="2013-07" db="EMBL/GenBank/DDBJ databases">
        <title>Molecular characterization of mannose binding lectin protein in divergent breeds of chickens.</title>
        <authorList>
            <person name="Mamu G."/>
            <person name="Brah G.S."/>
            <person name="Deka D."/>
            <person name="Mukhopadhyay C.S."/>
        </authorList>
    </citation>
    <scope>NUCLEOTIDE SEQUENCE [MRNA]</scope>
    <source>
        <tissue>Liver</tissue>
    </source>
</reference>
<reference key="3">
    <citation type="submission" date="2016-06" db="EMBL/GenBank/DDBJ databases">
        <authorList>
            <person name="Kjaerup R.B."/>
            <person name="Dalgaard T.S."/>
            <person name="Juul-Madsen H.R."/>
        </authorList>
    </citation>
    <scope>NUCLEOTIDE SEQUENCE [MRNA]</scope>
</reference>
<reference key="4">
    <citation type="journal article" date="2004" name="Nature">
        <title>Sequence and comparative analysis of the chicken genome provide unique perspectives on vertebrate evolution.</title>
        <authorList>
            <person name="Hillier L.W."/>
            <person name="Miller W."/>
            <person name="Birney E."/>
            <person name="Warren W."/>
            <person name="Hardison R.C."/>
            <person name="Ponting C.P."/>
            <person name="Bork P."/>
            <person name="Burt D.W."/>
            <person name="Groenen M.A.M."/>
            <person name="Delany M.E."/>
            <person name="Dodgson J.B."/>
            <person name="Chinwalla A.T."/>
            <person name="Cliften P.F."/>
            <person name="Clifton S.W."/>
            <person name="Delehaunty K.D."/>
            <person name="Fronick C."/>
            <person name="Fulton R.S."/>
            <person name="Graves T.A."/>
            <person name="Kremitzki C."/>
            <person name="Layman D."/>
            <person name="Magrini V."/>
            <person name="McPherson J.D."/>
            <person name="Miner T.L."/>
            <person name="Minx P."/>
            <person name="Nash W.E."/>
            <person name="Nhan M.N."/>
            <person name="Nelson J.O."/>
            <person name="Oddy L.G."/>
            <person name="Pohl C.S."/>
            <person name="Randall-Maher J."/>
            <person name="Smith S.M."/>
            <person name="Wallis J.W."/>
            <person name="Yang S.-P."/>
            <person name="Romanov M.N."/>
            <person name="Rondelli C.M."/>
            <person name="Paton B."/>
            <person name="Smith J."/>
            <person name="Morrice D."/>
            <person name="Daniels L."/>
            <person name="Tempest H.G."/>
            <person name="Robertson L."/>
            <person name="Masabanda J.S."/>
            <person name="Griffin D.K."/>
            <person name="Vignal A."/>
            <person name="Fillon V."/>
            <person name="Jacobbson L."/>
            <person name="Kerje S."/>
            <person name="Andersson L."/>
            <person name="Crooijmans R.P."/>
            <person name="Aerts J."/>
            <person name="van der Poel J.J."/>
            <person name="Ellegren H."/>
            <person name="Caldwell R.B."/>
            <person name="Hubbard S.J."/>
            <person name="Grafham D.V."/>
            <person name="Kierzek A.M."/>
            <person name="McLaren S.R."/>
            <person name="Overton I.M."/>
            <person name="Arakawa H."/>
            <person name="Beattie K.J."/>
            <person name="Bezzubov Y."/>
            <person name="Boardman P.E."/>
            <person name="Bonfield J.K."/>
            <person name="Croning M.D.R."/>
            <person name="Davies R.M."/>
            <person name="Francis M.D."/>
            <person name="Humphray S.J."/>
            <person name="Scott C.E."/>
            <person name="Taylor R.G."/>
            <person name="Tickle C."/>
            <person name="Brown W.R.A."/>
            <person name="Rogers J."/>
            <person name="Buerstedde J.-M."/>
            <person name="Wilson S.A."/>
            <person name="Stubbs L."/>
            <person name="Ovcharenko I."/>
            <person name="Gordon L."/>
            <person name="Lucas S."/>
            <person name="Miller M.M."/>
            <person name="Inoko H."/>
            <person name="Shiina T."/>
            <person name="Kaufman J."/>
            <person name="Salomonsen J."/>
            <person name="Skjoedt K."/>
            <person name="Wong G.K.-S."/>
            <person name="Wang J."/>
            <person name="Liu B."/>
            <person name="Wang J."/>
            <person name="Yu J."/>
            <person name="Yang H."/>
            <person name="Nefedov M."/>
            <person name="Koriabine M."/>
            <person name="Dejong P.J."/>
            <person name="Goodstadt L."/>
            <person name="Webber C."/>
            <person name="Dickens N.J."/>
            <person name="Letunic I."/>
            <person name="Suyama M."/>
            <person name="Torrents D."/>
            <person name="von Mering C."/>
            <person name="Zdobnov E.M."/>
            <person name="Makova K."/>
            <person name="Nekrutenko A."/>
            <person name="Elnitski L."/>
            <person name="Eswara P."/>
            <person name="King D.C."/>
            <person name="Yang S.-P."/>
            <person name="Tyekucheva S."/>
            <person name="Radakrishnan A."/>
            <person name="Harris R.S."/>
            <person name="Chiaromonte F."/>
            <person name="Taylor J."/>
            <person name="He J."/>
            <person name="Rijnkels M."/>
            <person name="Griffiths-Jones S."/>
            <person name="Ureta-Vidal A."/>
            <person name="Hoffman M.M."/>
            <person name="Severin J."/>
            <person name="Searle S.M.J."/>
            <person name="Law A.S."/>
            <person name="Speed D."/>
            <person name="Waddington D."/>
            <person name="Cheng Z."/>
            <person name="Tuzun E."/>
            <person name="Eichler E."/>
            <person name="Bao Z."/>
            <person name="Flicek P."/>
            <person name="Shteynberg D.D."/>
            <person name="Brent M.R."/>
            <person name="Bye J.M."/>
            <person name="Huckle E.J."/>
            <person name="Chatterji S."/>
            <person name="Dewey C."/>
            <person name="Pachter L."/>
            <person name="Kouranov A."/>
            <person name="Mourelatos Z."/>
            <person name="Hatzigeorgiou A.G."/>
            <person name="Paterson A.H."/>
            <person name="Ivarie R."/>
            <person name="Brandstrom M."/>
            <person name="Axelsson E."/>
            <person name="Backstrom N."/>
            <person name="Berlin S."/>
            <person name="Webster M.T."/>
            <person name="Pourquie O."/>
            <person name="Reymond A."/>
            <person name="Ucla C."/>
            <person name="Antonarakis S.E."/>
            <person name="Long M."/>
            <person name="Emerson J.J."/>
            <person name="Betran E."/>
            <person name="Dupanloup I."/>
            <person name="Kaessmann H."/>
            <person name="Hinrichs A.S."/>
            <person name="Bejerano G."/>
            <person name="Furey T.S."/>
            <person name="Harte R.A."/>
            <person name="Raney B."/>
            <person name="Siepel A."/>
            <person name="Kent W.J."/>
            <person name="Haussler D."/>
            <person name="Eyras E."/>
            <person name="Castelo R."/>
            <person name="Abril J.F."/>
            <person name="Castellano S."/>
            <person name="Camara F."/>
            <person name="Parra G."/>
            <person name="Guigo R."/>
            <person name="Bourque G."/>
            <person name="Tesler G."/>
            <person name="Pevzner P.A."/>
            <person name="Smit A."/>
            <person name="Fulton L.A."/>
            <person name="Mardis E.R."/>
            <person name="Wilson R.K."/>
        </authorList>
    </citation>
    <scope>NUCLEOTIDE SEQUENCE [LARGE SCALE GENOMIC DNA]</scope>
    <source>
        <strain>Red jungle fowl</strain>
    </source>
</reference>
<reference key="5">
    <citation type="journal article" date="2015" name="Mol. Immunol.">
        <title>Annotation and genetic diversity of the chicken collagenous lectins.</title>
        <authorList>
            <person name="Hamzic E."/>
            <person name="Pinard-van der Laan M.H."/>
            <person name="Bed'Hom B."/>
            <person name="Juul-Madsen H.R."/>
        </authorList>
    </citation>
    <scope>LACK OF PARALOG</scope>
</reference>
<proteinExistence type="evidence at transcript level"/>
<sequence>MTLLQPFSALLLCLSLMMATSLLTTDKPEEKMYSCPIIQCSAPAVNGLPGRDGRDGPKGEKGDPGEGLRGLQGLPGKAGPQGLKGEVGPQGEKGQKGERGIAVTDDLHRQITDLEAKIRVLEDDLSRYKKALSLKDFVNVGKKMFVSTGKKYNFEKGKSLCAKAGSVLASPRNEAENTALKDLIDPSSQAYIGISDAQTEGRFMYLSGGPLTYSNWKPGEPNNHKNEDCAVIEDSGKWNDLDCSNSNIFIICEL</sequence>
<gene>
    <name evidence="7" type="primary">MBL</name>
</gene>
<feature type="signal peptide" evidence="3">
    <location>
        <begin position="1"/>
        <end position="19"/>
    </location>
</feature>
<feature type="chain" id="PRO_5005942485" description="Mannose-binding protein">
    <location>
        <begin position="20"/>
        <end position="254"/>
    </location>
</feature>
<feature type="domain" description="C-type lectin" evidence="3">
    <location>
        <begin position="140"/>
        <end position="250"/>
    </location>
</feature>
<feature type="region of interest" description="Disordered" evidence="5">
    <location>
        <begin position="46"/>
        <end position="99"/>
    </location>
</feature>
<feature type="compositionally biased region" description="Basic and acidic residues" evidence="5">
    <location>
        <begin position="51"/>
        <end position="66"/>
    </location>
</feature>
<feature type="modified residue" description="4-hydroxyproline" evidence="3">
    <location>
        <position position="57"/>
    </location>
</feature>
<feature type="modified residue" description="5-hydroxylysine" evidence="1">
    <location>
        <position position="58"/>
    </location>
</feature>
<feature type="modified residue" description="5-hydroxylysine" evidence="1">
    <location>
        <position position="61"/>
    </location>
</feature>
<feature type="modified residue" description="4-hydroxyproline" evidence="3">
    <location>
        <position position="75"/>
    </location>
</feature>
<feature type="modified residue" description="5-hydroxylysine" evidence="1">
    <location>
        <position position="93"/>
    </location>
</feature>
<feature type="modified residue" description="5-hydroxylysine" evidence="1">
    <location>
        <position position="96"/>
    </location>
</feature>
<feature type="glycosylation site" description="O-linked (Gal...) hydroxylysine" evidence="1">
    <location>
        <position position="58"/>
    </location>
</feature>
<feature type="glycosylation site" description="O-linked (Gal...) hydroxylysine" evidence="1">
    <location>
        <position position="61"/>
    </location>
</feature>
<feature type="disulfide bond" evidence="1">
    <location>
        <begin position="161"/>
        <end position="252"/>
    </location>
</feature>
<feature type="disulfide bond" evidence="4">
    <location>
        <begin position="229"/>
        <end position="243"/>
    </location>
</feature>
<feature type="sequence conflict" description="In Ref. 1; AAK30298 and 2; AHA14647." ref="1 2">
    <original>A</original>
    <variation>V</variation>
    <location>
        <position position="102"/>
    </location>
</feature>
<feature type="sequence conflict" description="In Ref. 1; AAK30298 and 2; AHA14647." ref="1 2">
    <original>F</original>
    <variation>V</variation>
    <location>
        <position position="137"/>
    </location>
</feature>
<organism evidence="8">
    <name type="scientific">Gallus gallus</name>
    <name type="common">Chicken</name>
    <dbReference type="NCBI Taxonomy" id="9031"/>
    <lineage>
        <taxon>Eukaryota</taxon>
        <taxon>Metazoa</taxon>
        <taxon>Chordata</taxon>
        <taxon>Craniata</taxon>
        <taxon>Vertebrata</taxon>
        <taxon>Euteleostomi</taxon>
        <taxon>Archelosauria</taxon>
        <taxon>Archosauria</taxon>
        <taxon>Dinosauria</taxon>
        <taxon>Saurischia</taxon>
        <taxon>Theropoda</taxon>
        <taxon>Coelurosauria</taxon>
        <taxon>Aves</taxon>
        <taxon>Neognathae</taxon>
        <taxon>Galloanserae</taxon>
        <taxon>Galliformes</taxon>
        <taxon>Phasianidae</taxon>
        <taxon>Phasianinae</taxon>
        <taxon>Gallus</taxon>
    </lineage>
</organism>
<accession>Q98TA4</accession>
<accession>F1NKG3</accession>